<evidence type="ECO:0000269" key="1">
    <source>
    </source>
</evidence>
<evidence type="ECO:0000305" key="2"/>
<keyword id="KW-0903">Direct protein sequencing</keyword>
<keyword id="KW-0382">Hypotensive agent</keyword>
<keyword id="KW-0481">Metalloenzyme inhibitor</keyword>
<keyword id="KW-0483">Metalloprotease inhibitor</keyword>
<keyword id="KW-0646">Protease inhibitor</keyword>
<keyword id="KW-0964">Secreted</keyword>
<organism>
    <name type="scientific">Bothrops neuwiedi</name>
    <name type="common">Neuwied's lancehead</name>
    <dbReference type="NCBI Taxonomy" id="95648"/>
    <lineage>
        <taxon>Eukaryota</taxon>
        <taxon>Metazoa</taxon>
        <taxon>Chordata</taxon>
        <taxon>Craniata</taxon>
        <taxon>Vertebrata</taxon>
        <taxon>Euteleostomi</taxon>
        <taxon>Lepidosauria</taxon>
        <taxon>Squamata</taxon>
        <taxon>Bifurcata</taxon>
        <taxon>Unidentata</taxon>
        <taxon>Episquamata</taxon>
        <taxon>Toxicofera</taxon>
        <taxon>Serpentes</taxon>
        <taxon>Colubroidea</taxon>
        <taxon>Viperidae</taxon>
        <taxon>Crotalinae</taxon>
        <taxon>Bothrops</taxon>
    </lineage>
</organism>
<protein>
    <recommendedName>
        <fullName>Bradykinin-potentiating peptide 2</fullName>
        <shortName>BPP-2</shortName>
    </recommendedName>
    <alternativeName>
        <fullName>BPP-II</fullName>
    </alternativeName>
</protein>
<accession>P0C7S1</accession>
<dbReference type="GO" id="GO:0005576">
    <property type="term" value="C:extracellular region"/>
    <property type="evidence" value="ECO:0007669"/>
    <property type="project" value="UniProtKB-SubCell"/>
</dbReference>
<dbReference type="GO" id="GO:0030414">
    <property type="term" value="F:peptidase inhibitor activity"/>
    <property type="evidence" value="ECO:0007669"/>
    <property type="project" value="UniProtKB-KW"/>
</dbReference>
<dbReference type="GO" id="GO:0008217">
    <property type="term" value="P:regulation of blood pressure"/>
    <property type="evidence" value="ECO:0007669"/>
    <property type="project" value="UniProtKB-KW"/>
</dbReference>
<reference key="1">
    <citation type="journal article" date="1998" name="J. Protein Chem.">
        <title>Isolation: analysis and properties of three bradykinin-potentiating peptides (BPP-II, BPP-III, and BPP-V) from Bothrops neuwiedi venom.</title>
        <authorList>
            <person name="Ferreira L.A.F."/>
            <person name="Galle A."/>
            <person name="Raida M."/>
            <person name="Schrader M."/>
            <person name="Lebrun I."/>
            <person name="Habermehl G."/>
        </authorList>
    </citation>
    <scope>PROTEIN SEQUENCE</scope>
    <scope>MASS SPECTROMETRY</scope>
    <source>
        <tissue>Venom</tissue>
    </source>
</reference>
<name>BPP2_BOTNU</name>
<feature type="peptide" id="PRO_0000343185" description="Bradykinin-potentiating peptide 2">
    <location>
        <begin position="1"/>
        <end position="10"/>
    </location>
</feature>
<sequence>EEGGRPPPPI</sequence>
<comment type="function">
    <text>This peptide both inhibits the activity of the angiotensin-converting enzyme (ACE) and enhances the action of bradykinin by inhibiting the peptidases that inactivate it. It acts as an indirect hypotensive agent.</text>
</comment>
<comment type="subcellular location">
    <subcellularLocation>
        <location>Secreted</location>
    </subcellularLocation>
</comment>
<comment type="tissue specificity">
    <text>Expressed by the venom gland.</text>
</comment>
<comment type="mass spectrometry"/>
<comment type="similarity">
    <text evidence="2">Belongs to the bradykinin-potentiating peptide family.</text>
</comment>
<proteinExistence type="evidence at protein level"/>